<reference key="1">
    <citation type="submission" date="2005-09" db="EMBL/GenBank/DDBJ databases">
        <title>Annotation of the Aspergillus terreus NIH2624 genome.</title>
        <authorList>
            <person name="Birren B.W."/>
            <person name="Lander E.S."/>
            <person name="Galagan J.E."/>
            <person name="Nusbaum C."/>
            <person name="Devon K."/>
            <person name="Henn M."/>
            <person name="Ma L.-J."/>
            <person name="Jaffe D.B."/>
            <person name="Butler J."/>
            <person name="Alvarez P."/>
            <person name="Gnerre S."/>
            <person name="Grabherr M."/>
            <person name="Kleber M."/>
            <person name="Mauceli E.W."/>
            <person name="Brockman W."/>
            <person name="Rounsley S."/>
            <person name="Young S.K."/>
            <person name="LaButti K."/>
            <person name="Pushparaj V."/>
            <person name="DeCaprio D."/>
            <person name="Crawford M."/>
            <person name="Koehrsen M."/>
            <person name="Engels R."/>
            <person name="Montgomery P."/>
            <person name="Pearson M."/>
            <person name="Howarth C."/>
            <person name="Larson L."/>
            <person name="Luoma S."/>
            <person name="White J."/>
            <person name="Alvarado L."/>
            <person name="Kodira C.D."/>
            <person name="Zeng Q."/>
            <person name="Oleary S."/>
            <person name="Yandava C."/>
            <person name="Denning D.W."/>
            <person name="Nierman W.C."/>
            <person name="Milne T."/>
            <person name="Madden K."/>
        </authorList>
    </citation>
    <scope>NUCLEOTIDE SEQUENCE [LARGE SCALE GENOMIC DNA]</scope>
    <source>
        <strain>NIH 2624 / FGSC A1156</strain>
    </source>
</reference>
<comment type="function">
    <text evidence="2 3">Probable aspartic protease. May be involved in the regulation of exocytosis. Acts as a linker between the 19S proteasome and polyubiquitinated proteins via UBA domain interactions with ubiquitin for their subsequent degradation. Required for S-phase checkpoint control.</text>
</comment>
<comment type="subunit">
    <text evidence="1">Binds ubiquitin and polyubiquitinated proteins.</text>
</comment>
<comment type="subcellular location">
    <subcellularLocation>
        <location evidence="1">Cytoplasm</location>
    </subcellularLocation>
</comment>
<comment type="similarity">
    <text evidence="7">Belongs to the DDI1 family.</text>
</comment>
<feature type="chain" id="PRO_0000285308" description="DNA damage-inducible protein 1">
    <location>
        <begin position="1"/>
        <end position="413"/>
    </location>
</feature>
<feature type="domain" description="Ubiquitin-like" evidence="5">
    <location>
        <begin position="1"/>
        <end position="57"/>
    </location>
</feature>
<feature type="domain" description="UBA" evidence="4">
    <location>
        <begin position="375"/>
        <end position="413"/>
    </location>
</feature>
<feature type="region of interest" description="Disordered" evidence="6">
    <location>
        <begin position="59"/>
        <end position="85"/>
    </location>
</feature>
<feature type="region of interest" description="Disordered" evidence="6">
    <location>
        <begin position="337"/>
        <end position="379"/>
    </location>
</feature>
<feature type="compositionally biased region" description="Low complexity" evidence="6">
    <location>
        <begin position="61"/>
        <end position="81"/>
    </location>
</feature>
<feature type="compositionally biased region" description="Low complexity" evidence="6">
    <location>
        <begin position="340"/>
        <end position="362"/>
    </location>
</feature>
<feature type="active site" evidence="7">
    <location>
        <position position="204"/>
    </location>
</feature>
<dbReference type="EC" id="3.4.23.-" evidence="2"/>
<dbReference type="EMBL" id="CH476602">
    <property type="protein sequence ID" value="EAU32865.1"/>
    <property type="molecule type" value="Genomic_DNA"/>
</dbReference>
<dbReference type="RefSeq" id="XP_001215499.1">
    <property type="nucleotide sequence ID" value="XM_001215499.1"/>
</dbReference>
<dbReference type="SMR" id="Q0CJ13"/>
<dbReference type="STRING" id="341663.Q0CJ13"/>
<dbReference type="EnsemblFungi" id="EAU32865">
    <property type="protein sequence ID" value="EAU32865"/>
    <property type="gene ID" value="ATEG_06321"/>
</dbReference>
<dbReference type="GeneID" id="4321997"/>
<dbReference type="VEuPathDB" id="FungiDB:ATEG_06321"/>
<dbReference type="eggNOG" id="KOG0012">
    <property type="taxonomic scope" value="Eukaryota"/>
</dbReference>
<dbReference type="HOGENOM" id="CLU_020435_2_0_1"/>
<dbReference type="OMA" id="GHRLNAF"/>
<dbReference type="OrthoDB" id="1047367at2759"/>
<dbReference type="Proteomes" id="UP000007963">
    <property type="component" value="Unassembled WGS sequence"/>
</dbReference>
<dbReference type="GO" id="GO:0005737">
    <property type="term" value="C:cytoplasm"/>
    <property type="evidence" value="ECO:0007669"/>
    <property type="project" value="UniProtKB-SubCell"/>
</dbReference>
<dbReference type="GO" id="GO:0004190">
    <property type="term" value="F:aspartic-type endopeptidase activity"/>
    <property type="evidence" value="ECO:0007669"/>
    <property type="project" value="UniProtKB-KW"/>
</dbReference>
<dbReference type="GO" id="GO:0015031">
    <property type="term" value="P:protein transport"/>
    <property type="evidence" value="ECO:0007669"/>
    <property type="project" value="UniProtKB-KW"/>
</dbReference>
<dbReference type="GO" id="GO:0006508">
    <property type="term" value="P:proteolysis"/>
    <property type="evidence" value="ECO:0007669"/>
    <property type="project" value="UniProtKB-KW"/>
</dbReference>
<dbReference type="CDD" id="cd05479">
    <property type="entry name" value="RP_DDI"/>
    <property type="match status" value="1"/>
</dbReference>
<dbReference type="CDD" id="cd01796">
    <property type="entry name" value="Ubl_Ddi1_like"/>
    <property type="match status" value="1"/>
</dbReference>
<dbReference type="Gene3D" id="2.40.70.10">
    <property type="entry name" value="Acid Proteases"/>
    <property type="match status" value="1"/>
</dbReference>
<dbReference type="Gene3D" id="1.10.8.10">
    <property type="entry name" value="DNA helicase RuvA subunit, C-terminal domain"/>
    <property type="match status" value="1"/>
</dbReference>
<dbReference type="Gene3D" id="3.10.20.90">
    <property type="entry name" value="Phosphatidylinositol 3-kinase Catalytic Subunit, Chain A, domain 1"/>
    <property type="match status" value="1"/>
</dbReference>
<dbReference type="InterPro" id="IPR033882">
    <property type="entry name" value="DDI1_N"/>
</dbReference>
<dbReference type="InterPro" id="IPR019103">
    <property type="entry name" value="Peptidase_aspartic_DDI1-type"/>
</dbReference>
<dbReference type="InterPro" id="IPR021109">
    <property type="entry name" value="Peptidase_aspartic_dom_sf"/>
</dbReference>
<dbReference type="InterPro" id="IPR015940">
    <property type="entry name" value="UBA"/>
</dbReference>
<dbReference type="InterPro" id="IPR009060">
    <property type="entry name" value="UBA-like_sf"/>
</dbReference>
<dbReference type="InterPro" id="IPR000626">
    <property type="entry name" value="Ubiquitin-like_dom"/>
</dbReference>
<dbReference type="InterPro" id="IPR029071">
    <property type="entry name" value="Ubiquitin-like_domsf"/>
</dbReference>
<dbReference type="PANTHER" id="PTHR12917">
    <property type="entry name" value="ASPARTYL PROTEASE DDI-RELATED"/>
    <property type="match status" value="1"/>
</dbReference>
<dbReference type="PANTHER" id="PTHR12917:SF1">
    <property type="entry name" value="AT13091P"/>
    <property type="match status" value="1"/>
</dbReference>
<dbReference type="Pfam" id="PF09668">
    <property type="entry name" value="Asp_protease"/>
    <property type="match status" value="1"/>
</dbReference>
<dbReference type="Pfam" id="PF24669">
    <property type="entry name" value="Ddi2_HDD"/>
    <property type="match status" value="1"/>
</dbReference>
<dbReference type="Pfam" id="PF00627">
    <property type="entry name" value="UBA"/>
    <property type="match status" value="1"/>
</dbReference>
<dbReference type="Pfam" id="PF00240">
    <property type="entry name" value="ubiquitin"/>
    <property type="match status" value="1"/>
</dbReference>
<dbReference type="SMART" id="SM00165">
    <property type="entry name" value="UBA"/>
    <property type="match status" value="1"/>
</dbReference>
<dbReference type="SUPFAM" id="SSF50630">
    <property type="entry name" value="Acid proteases"/>
    <property type="match status" value="1"/>
</dbReference>
<dbReference type="SUPFAM" id="SSF46934">
    <property type="entry name" value="UBA-like"/>
    <property type="match status" value="1"/>
</dbReference>
<dbReference type="SUPFAM" id="SSF54236">
    <property type="entry name" value="Ubiquitin-like"/>
    <property type="match status" value="1"/>
</dbReference>
<dbReference type="PROSITE" id="PS50030">
    <property type="entry name" value="UBA"/>
    <property type="match status" value="1"/>
</dbReference>
<dbReference type="PROSITE" id="PS50053">
    <property type="entry name" value="UBIQUITIN_2"/>
    <property type="match status" value="1"/>
</dbReference>
<name>DDI1_ASPTN</name>
<sequence length="413" mass="44932">MTVDLLKAIVESETSIPPNAQRILYNNQLLGDDTRTLEQVGIGEGDMLGVQVMLRTPQQPARALGGSSAAAAQQNLQRRQAMGPDPETIRLHILGDPRVREAVRRQNPELSNAADDPQRFREVLIAQQRREAQLEAEKEARIAMLNADPFNPENQREIEEIIRQNAVTENLHNAMEHHPESFGRVTMLYIPVEVNGHRLNAFVDSGAQVTIMSPECATACNIMRLVDQRYGGIAKGVGTANILGRVHSAQIKIGSLFLPCSFTVMEGKHIDLLLGLDMLRRHQACIDLKRGALIIQDQAVPFLGEADIPKHLQDEFEDEPMVKGSDGAEVGARTGAVTHQANQGGASSAGPSSAPAPSSNAPRINIRPAPTQSSRWPQDSIAKITELGFTREEAMRALDAANGDLDGAIGFLI</sequence>
<gene>
    <name type="primary">ddi1</name>
    <name type="ORF">ATEG_06321</name>
</gene>
<proteinExistence type="inferred from homology"/>
<keyword id="KW-0064">Aspartyl protease</keyword>
<keyword id="KW-0963">Cytoplasm</keyword>
<keyword id="KW-0378">Hydrolase</keyword>
<keyword id="KW-0645">Protease</keyword>
<keyword id="KW-0653">Protein transport</keyword>
<keyword id="KW-1185">Reference proteome</keyword>
<keyword id="KW-0813">Transport</keyword>
<organism>
    <name type="scientific">Aspergillus terreus (strain NIH 2624 / FGSC A1156)</name>
    <dbReference type="NCBI Taxonomy" id="341663"/>
    <lineage>
        <taxon>Eukaryota</taxon>
        <taxon>Fungi</taxon>
        <taxon>Dikarya</taxon>
        <taxon>Ascomycota</taxon>
        <taxon>Pezizomycotina</taxon>
        <taxon>Eurotiomycetes</taxon>
        <taxon>Eurotiomycetidae</taxon>
        <taxon>Eurotiales</taxon>
        <taxon>Aspergillaceae</taxon>
        <taxon>Aspergillus</taxon>
        <taxon>Aspergillus subgen. Circumdati</taxon>
    </lineage>
</organism>
<accession>Q0CJ13</accession>
<protein>
    <recommendedName>
        <fullName>DNA damage-inducible protein 1</fullName>
        <ecNumber evidence="2">3.4.23.-</ecNumber>
    </recommendedName>
</protein>
<evidence type="ECO:0000250" key="1"/>
<evidence type="ECO:0000250" key="2">
    <source>
        <dbReference type="UniProtKB" id="I7HUG0"/>
    </source>
</evidence>
<evidence type="ECO:0000250" key="3">
    <source>
        <dbReference type="UniProtKB" id="P40087"/>
    </source>
</evidence>
<evidence type="ECO:0000255" key="4">
    <source>
        <dbReference type="PROSITE-ProRule" id="PRU00212"/>
    </source>
</evidence>
<evidence type="ECO:0000255" key="5">
    <source>
        <dbReference type="PROSITE-ProRule" id="PRU00214"/>
    </source>
</evidence>
<evidence type="ECO:0000256" key="6">
    <source>
        <dbReference type="SAM" id="MobiDB-lite"/>
    </source>
</evidence>
<evidence type="ECO:0000305" key="7"/>